<organism>
    <name type="scientific">Pyrococcus furiosus (strain ATCC 43587 / DSM 3638 / JCM 8422 / Vc1)</name>
    <dbReference type="NCBI Taxonomy" id="186497"/>
    <lineage>
        <taxon>Archaea</taxon>
        <taxon>Methanobacteriati</taxon>
        <taxon>Methanobacteriota</taxon>
        <taxon>Thermococci</taxon>
        <taxon>Thermococcales</taxon>
        <taxon>Thermococcaceae</taxon>
        <taxon>Pyrococcus</taxon>
    </lineage>
</organism>
<gene>
    <name evidence="1" type="primary">gcvPA</name>
    <name type="ordered locus">PF1999</name>
</gene>
<sequence>MGKHYIPNSAHKEEMLKEIGFSSIEELFADVPEGFIREFNVPEGKSEYEVFMEMNEILSKNKTVLEMPTFLGAGTYFHYVPAHVKYLIERSEFLTSYTPYQAEISQGMLQALFEYQSLIAELVGLPVVNSSMYDWGSALGEAALMTVRLHRGKRLKFVVPKHTHPERMQVLKTYTRGANLEIVEVKWNDRGQVDLEDLKEKVNDAAGVYVEIPNFFGLLEENIQEIGEIAHEAGAYFVVGVDPTILGVVEAPGELGADIVVGEASYFGSPMNFGGPRAGIFATRNDPKFIRQMPGRIIGMTKDAEGKRAFVMTLQTREQHIRRAKATSNICSNEALVAVAAAIHIASLGPKGMQELGEVILKNTAYLKKRLSEVAEIPFDGVNFKDVLVKFEKPYQEIHEHLLQKNIHGGYYVKPHFPELGESALFAATETTRKEWIDALIDALREVL</sequence>
<name>GCSPA_PYRFU</name>
<comment type="function">
    <text evidence="1">The glycine cleavage system catalyzes the degradation of glycine. The P protein binds the alpha-amino group of glycine through its pyridoxal phosphate cofactor; CO(2) is released and the remaining methylamine moiety is then transferred to the lipoamide cofactor of the H protein.</text>
</comment>
<comment type="catalytic activity">
    <reaction evidence="1">
        <text>N(6)-[(R)-lipoyl]-L-lysyl-[glycine-cleavage complex H protein] + glycine + H(+) = N(6)-[(R)-S(8)-aminomethyldihydrolipoyl]-L-lysyl-[glycine-cleavage complex H protein] + CO2</text>
        <dbReference type="Rhea" id="RHEA:24304"/>
        <dbReference type="Rhea" id="RHEA-COMP:10494"/>
        <dbReference type="Rhea" id="RHEA-COMP:10495"/>
        <dbReference type="ChEBI" id="CHEBI:15378"/>
        <dbReference type="ChEBI" id="CHEBI:16526"/>
        <dbReference type="ChEBI" id="CHEBI:57305"/>
        <dbReference type="ChEBI" id="CHEBI:83099"/>
        <dbReference type="ChEBI" id="CHEBI:83143"/>
        <dbReference type="EC" id="1.4.4.2"/>
    </reaction>
</comment>
<comment type="subunit">
    <text evidence="1">The glycine cleavage system is composed of four proteins: P, T, L and H. In this organism, the P 'protein' is a heterodimer of two subunits.</text>
</comment>
<comment type="similarity">
    <text evidence="1">Belongs to the GcvP family. N-terminal subunit subfamily.</text>
</comment>
<protein>
    <recommendedName>
        <fullName evidence="1">Probable glycine dehydrogenase (decarboxylating) subunit 1</fullName>
        <ecNumber evidence="1">1.4.4.2</ecNumber>
    </recommendedName>
    <alternativeName>
        <fullName evidence="1">Glycine cleavage system P-protein subunit 1</fullName>
    </alternativeName>
    <alternativeName>
        <fullName evidence="1">Glycine decarboxylase subunit 1</fullName>
    </alternativeName>
    <alternativeName>
        <fullName evidence="1">Glycine dehydrogenase (aminomethyl-transferring) subunit 1</fullName>
    </alternativeName>
</protein>
<feature type="chain" id="PRO_0000166985" description="Probable glycine dehydrogenase (decarboxylating) subunit 1">
    <location>
        <begin position="1"/>
        <end position="448"/>
    </location>
</feature>
<accession>Q8TZJ3</accession>
<proteinExistence type="inferred from homology"/>
<dbReference type="EC" id="1.4.4.2" evidence="1"/>
<dbReference type="EMBL" id="AE009950">
    <property type="protein sequence ID" value="AAL82123.1"/>
    <property type="molecule type" value="Genomic_DNA"/>
</dbReference>
<dbReference type="RefSeq" id="WP_011013143.1">
    <property type="nucleotide sequence ID" value="NZ_CP023154.1"/>
</dbReference>
<dbReference type="SMR" id="Q8TZJ3"/>
<dbReference type="STRING" id="186497.PF1999"/>
<dbReference type="PaxDb" id="186497-PF1999"/>
<dbReference type="GeneID" id="41713823"/>
<dbReference type="KEGG" id="pfu:PF1999"/>
<dbReference type="PATRIC" id="fig|186497.12.peg.2075"/>
<dbReference type="eggNOG" id="arCOG00077">
    <property type="taxonomic scope" value="Archaea"/>
</dbReference>
<dbReference type="HOGENOM" id="CLU_004620_0_2_2"/>
<dbReference type="OrthoDB" id="17655at2157"/>
<dbReference type="PhylomeDB" id="Q8TZJ3"/>
<dbReference type="Proteomes" id="UP000001013">
    <property type="component" value="Chromosome"/>
</dbReference>
<dbReference type="GO" id="GO:0004375">
    <property type="term" value="F:glycine dehydrogenase (decarboxylating) activity"/>
    <property type="evidence" value="ECO:0007669"/>
    <property type="project" value="UniProtKB-EC"/>
</dbReference>
<dbReference type="GO" id="GO:0019464">
    <property type="term" value="P:glycine decarboxylation via glycine cleavage system"/>
    <property type="evidence" value="ECO:0007669"/>
    <property type="project" value="UniProtKB-UniRule"/>
</dbReference>
<dbReference type="GO" id="GO:0009116">
    <property type="term" value="P:nucleoside metabolic process"/>
    <property type="evidence" value="ECO:0007669"/>
    <property type="project" value="InterPro"/>
</dbReference>
<dbReference type="CDD" id="cd00613">
    <property type="entry name" value="GDC-P"/>
    <property type="match status" value="1"/>
</dbReference>
<dbReference type="Gene3D" id="3.90.1150.10">
    <property type="entry name" value="Aspartate Aminotransferase, domain 1"/>
    <property type="match status" value="1"/>
</dbReference>
<dbReference type="Gene3D" id="3.40.640.10">
    <property type="entry name" value="Type I PLP-dependent aspartate aminotransferase-like (Major domain)"/>
    <property type="match status" value="1"/>
</dbReference>
<dbReference type="HAMAP" id="MF_00712">
    <property type="entry name" value="GcvPA"/>
    <property type="match status" value="1"/>
</dbReference>
<dbReference type="InterPro" id="IPR023010">
    <property type="entry name" value="GcvPA"/>
</dbReference>
<dbReference type="InterPro" id="IPR049315">
    <property type="entry name" value="GDC-P_N"/>
</dbReference>
<dbReference type="InterPro" id="IPR020581">
    <property type="entry name" value="GDC_P"/>
</dbReference>
<dbReference type="InterPro" id="IPR015424">
    <property type="entry name" value="PyrdxlP-dep_Trfase"/>
</dbReference>
<dbReference type="InterPro" id="IPR015421">
    <property type="entry name" value="PyrdxlP-dep_Trfase_major"/>
</dbReference>
<dbReference type="InterPro" id="IPR015422">
    <property type="entry name" value="PyrdxlP-dep_Trfase_small"/>
</dbReference>
<dbReference type="NCBIfam" id="NF001696">
    <property type="entry name" value="PRK00451.1"/>
    <property type="match status" value="1"/>
</dbReference>
<dbReference type="PANTHER" id="PTHR42806">
    <property type="entry name" value="GLYCINE CLEAVAGE SYSTEM P-PROTEIN"/>
    <property type="match status" value="1"/>
</dbReference>
<dbReference type="PANTHER" id="PTHR42806:SF1">
    <property type="entry name" value="GLYCINE DEHYDROGENASE (DECARBOXYLATING)"/>
    <property type="match status" value="1"/>
</dbReference>
<dbReference type="Pfam" id="PF02347">
    <property type="entry name" value="GDC-P"/>
    <property type="match status" value="1"/>
</dbReference>
<dbReference type="PIRSF" id="PIRSF006815">
    <property type="entry name" value="GcvPA"/>
    <property type="match status" value="1"/>
</dbReference>
<dbReference type="SUPFAM" id="SSF53383">
    <property type="entry name" value="PLP-dependent transferases"/>
    <property type="match status" value="1"/>
</dbReference>
<evidence type="ECO:0000255" key="1">
    <source>
        <dbReference type="HAMAP-Rule" id="MF_00712"/>
    </source>
</evidence>
<keyword id="KW-0560">Oxidoreductase</keyword>
<keyword id="KW-1185">Reference proteome</keyword>
<reference key="1">
    <citation type="journal article" date="1999" name="Genetics">
        <title>Divergence of the hyperthermophilic archaea Pyrococcus furiosus and P. horikoshii inferred from complete genomic sequences.</title>
        <authorList>
            <person name="Maeder D.L."/>
            <person name="Weiss R.B."/>
            <person name="Dunn D.M."/>
            <person name="Cherry J.L."/>
            <person name="Gonzalez J.M."/>
            <person name="DiRuggiero J."/>
            <person name="Robb F.T."/>
        </authorList>
    </citation>
    <scope>NUCLEOTIDE SEQUENCE [LARGE SCALE GENOMIC DNA]</scope>
    <source>
        <strain>ATCC 43587 / DSM 3638 / JCM 8422 / Vc1</strain>
    </source>
</reference>